<reference key="1">
    <citation type="journal article" date="2009" name="PLoS ONE">
        <title>Genome sequence of the versatile fish pathogen Edwardsiella tarda provides insights into its adaptation to broad host ranges and intracellular niches.</title>
        <authorList>
            <person name="Wang Q."/>
            <person name="Yang M."/>
            <person name="Xiao J."/>
            <person name="Wu H."/>
            <person name="Wang X."/>
            <person name="Lv Y."/>
            <person name="Xu L."/>
            <person name="Zheng H."/>
            <person name="Wang S."/>
            <person name="Zhao G."/>
            <person name="Liu Q."/>
            <person name="Zhang Y."/>
        </authorList>
    </citation>
    <scope>NUCLEOTIDE SEQUENCE [LARGE SCALE GENOMIC DNA]</scope>
    <source>
        <strain>EIB202 / CCTCC M208068</strain>
    </source>
</reference>
<gene>
    <name evidence="1" type="primary">tatE</name>
    <name type="ordered locus">ETAE_2651</name>
</gene>
<accession>D0ZCE7</accession>
<feature type="chain" id="PRO_0000412963" description="Probable Sec-independent protein translocase protein TatE">
    <location>
        <begin position="1"/>
        <end position="66"/>
    </location>
</feature>
<feature type="transmembrane region" description="Helical" evidence="1">
    <location>
        <begin position="1"/>
        <end position="21"/>
    </location>
</feature>
<feature type="region of interest" description="Disordered" evidence="2">
    <location>
        <begin position="46"/>
        <end position="66"/>
    </location>
</feature>
<proteinExistence type="inferred from homology"/>
<comment type="function">
    <text evidence="1">Part of the twin-arginine translocation (Tat) system that transports large folded proteins containing a characteristic twin-arginine motif in their signal peptide across membranes. TatE shares overlapping functions with TatA.</text>
</comment>
<comment type="subcellular location">
    <subcellularLocation>
        <location evidence="1">Cell inner membrane</location>
        <topology evidence="1">Single-pass membrane protein</topology>
    </subcellularLocation>
</comment>
<comment type="similarity">
    <text evidence="1">Belongs to the TatA/E family. TatE subfamily.</text>
</comment>
<keyword id="KW-0997">Cell inner membrane</keyword>
<keyword id="KW-1003">Cell membrane</keyword>
<keyword id="KW-0472">Membrane</keyword>
<keyword id="KW-0653">Protein transport</keyword>
<keyword id="KW-1185">Reference proteome</keyword>
<keyword id="KW-0811">Translocation</keyword>
<keyword id="KW-0812">Transmembrane</keyword>
<keyword id="KW-1133">Transmembrane helix</keyword>
<keyword id="KW-0813">Transport</keyword>
<dbReference type="EMBL" id="CP001135">
    <property type="protein sequence ID" value="ACY85486.1"/>
    <property type="molecule type" value="Genomic_DNA"/>
</dbReference>
<dbReference type="RefSeq" id="WP_012849478.1">
    <property type="nucleotide sequence ID" value="NZ_MPNU01000001.1"/>
</dbReference>
<dbReference type="SMR" id="D0ZCE7"/>
<dbReference type="GeneID" id="72529440"/>
<dbReference type="KEGG" id="etr:ETAE_2651"/>
<dbReference type="HOGENOM" id="CLU_086034_5_3_6"/>
<dbReference type="OrthoDB" id="7066617at2"/>
<dbReference type="Proteomes" id="UP000002634">
    <property type="component" value="Chromosome"/>
</dbReference>
<dbReference type="GO" id="GO:0033281">
    <property type="term" value="C:TAT protein transport complex"/>
    <property type="evidence" value="ECO:0007669"/>
    <property type="project" value="UniProtKB-UniRule"/>
</dbReference>
<dbReference type="GO" id="GO:0008320">
    <property type="term" value="F:protein transmembrane transporter activity"/>
    <property type="evidence" value="ECO:0007669"/>
    <property type="project" value="UniProtKB-UniRule"/>
</dbReference>
<dbReference type="GO" id="GO:0043953">
    <property type="term" value="P:protein transport by the Tat complex"/>
    <property type="evidence" value="ECO:0007669"/>
    <property type="project" value="UniProtKB-UniRule"/>
</dbReference>
<dbReference type="Gene3D" id="1.20.5.3310">
    <property type="match status" value="1"/>
</dbReference>
<dbReference type="HAMAP" id="MF_00236">
    <property type="entry name" value="TatA_E"/>
    <property type="match status" value="1"/>
</dbReference>
<dbReference type="HAMAP" id="MF_00903">
    <property type="entry name" value="TatE"/>
    <property type="match status" value="1"/>
</dbReference>
<dbReference type="InterPro" id="IPR003369">
    <property type="entry name" value="TatA/B/E"/>
</dbReference>
<dbReference type="InterPro" id="IPR006312">
    <property type="entry name" value="TatA/E"/>
</dbReference>
<dbReference type="InterPro" id="IPR024905">
    <property type="entry name" value="TatE"/>
</dbReference>
<dbReference type="NCBIfam" id="NF002448">
    <property type="entry name" value="PRK01614.1"/>
    <property type="match status" value="1"/>
</dbReference>
<dbReference type="NCBIfam" id="NF002960">
    <property type="entry name" value="PRK03625.1"/>
    <property type="match status" value="1"/>
</dbReference>
<dbReference type="NCBIfam" id="TIGR01411">
    <property type="entry name" value="tatAE"/>
    <property type="match status" value="1"/>
</dbReference>
<dbReference type="PANTHER" id="PTHR42982">
    <property type="entry name" value="SEC-INDEPENDENT PROTEIN TRANSLOCASE PROTEIN TATA"/>
    <property type="match status" value="1"/>
</dbReference>
<dbReference type="PANTHER" id="PTHR42982:SF5">
    <property type="entry name" value="SEC-INDEPENDENT PROTEIN TRANSLOCASE PROTEIN TATE"/>
    <property type="match status" value="1"/>
</dbReference>
<dbReference type="Pfam" id="PF02416">
    <property type="entry name" value="TatA_B_E"/>
    <property type="match status" value="1"/>
</dbReference>
<sequence length="66" mass="6955">MEGISITKLLVIAVLIVLLFGTNKLRTLGSDLGAALKGFKKAMNDETPAAKKSDGAEAAPRVENKE</sequence>
<name>TATE_EDWPI</name>
<organism>
    <name type="scientific">Edwardsiella piscicida</name>
    <dbReference type="NCBI Taxonomy" id="1263550"/>
    <lineage>
        <taxon>Bacteria</taxon>
        <taxon>Pseudomonadati</taxon>
        <taxon>Pseudomonadota</taxon>
        <taxon>Gammaproteobacteria</taxon>
        <taxon>Enterobacterales</taxon>
        <taxon>Hafniaceae</taxon>
        <taxon>Edwardsiella</taxon>
    </lineage>
</organism>
<protein>
    <recommendedName>
        <fullName evidence="1">Probable Sec-independent protein translocase protein TatE</fullName>
    </recommendedName>
</protein>
<evidence type="ECO:0000255" key="1">
    <source>
        <dbReference type="HAMAP-Rule" id="MF_00903"/>
    </source>
</evidence>
<evidence type="ECO:0000256" key="2">
    <source>
        <dbReference type="SAM" id="MobiDB-lite"/>
    </source>
</evidence>